<evidence type="ECO:0000255" key="1">
    <source>
        <dbReference type="HAMAP-Rule" id="MF_00745"/>
    </source>
</evidence>
<accession>B7GFQ0</accession>
<proteinExistence type="inferred from homology"/>
<comment type="cofactor">
    <cofactor evidence="1">
        <name>Zn(2+)</name>
        <dbReference type="ChEBI" id="CHEBI:29105"/>
    </cofactor>
    <text evidence="1">Binds 1 zinc ion.</text>
</comment>
<comment type="subcellular location">
    <subcellularLocation>
        <location evidence="1">Cytoplasm</location>
    </subcellularLocation>
</comment>
<comment type="similarity">
    <text evidence="1">Belongs to the SprT family.</text>
</comment>
<organism>
    <name type="scientific">Anoxybacillus flavithermus (strain DSM 21510 / WK1)</name>
    <dbReference type="NCBI Taxonomy" id="491915"/>
    <lineage>
        <taxon>Bacteria</taxon>
        <taxon>Bacillati</taxon>
        <taxon>Bacillota</taxon>
        <taxon>Bacilli</taxon>
        <taxon>Bacillales</taxon>
        <taxon>Anoxybacillaceae</taxon>
        <taxon>Anoxybacillus</taxon>
    </lineage>
</organism>
<reference key="1">
    <citation type="journal article" date="2008" name="Genome Biol.">
        <title>Encapsulated in silica: genome, proteome and physiology of the thermophilic bacterium Anoxybacillus flavithermus WK1.</title>
        <authorList>
            <person name="Saw J.H."/>
            <person name="Mountain B.W."/>
            <person name="Feng L."/>
            <person name="Omelchenko M.V."/>
            <person name="Hou S."/>
            <person name="Saito J.A."/>
            <person name="Stott M.B."/>
            <person name="Li D."/>
            <person name="Zhao G."/>
            <person name="Wu J."/>
            <person name="Galperin M.Y."/>
            <person name="Koonin E.V."/>
            <person name="Makarova K.S."/>
            <person name="Wolf Y.I."/>
            <person name="Rigden D.J."/>
            <person name="Dunfield P.F."/>
            <person name="Wang L."/>
            <person name="Alam M."/>
        </authorList>
    </citation>
    <scope>NUCLEOTIDE SEQUENCE [LARGE SCALE GENOMIC DNA]</scope>
    <source>
        <strain>DSM 21510 / WK1</strain>
    </source>
</reference>
<gene>
    <name type="ordered locus">Aflv_0202</name>
</gene>
<name>SPRTL_ANOFW</name>
<keyword id="KW-0963">Cytoplasm</keyword>
<keyword id="KW-0479">Metal-binding</keyword>
<keyword id="KW-0862">Zinc</keyword>
<protein>
    <recommendedName>
        <fullName evidence="1">Protein SprT-like</fullName>
    </recommendedName>
</protein>
<dbReference type="EMBL" id="CP000922">
    <property type="protein sequence ID" value="ACJ32586.1"/>
    <property type="molecule type" value="Genomic_DNA"/>
</dbReference>
<dbReference type="RefSeq" id="WP_012573929.1">
    <property type="nucleotide sequence ID" value="NC_011567.1"/>
</dbReference>
<dbReference type="STRING" id="491915.Aflv_0202"/>
<dbReference type="GeneID" id="7036415"/>
<dbReference type="KEGG" id="afl:Aflv_0202"/>
<dbReference type="PATRIC" id="fig|491915.6.peg.205"/>
<dbReference type="eggNOG" id="COG3091">
    <property type="taxonomic scope" value="Bacteria"/>
</dbReference>
<dbReference type="HOGENOM" id="CLU_123820_0_0_9"/>
<dbReference type="Proteomes" id="UP000000742">
    <property type="component" value="Chromosome"/>
</dbReference>
<dbReference type="GO" id="GO:0005737">
    <property type="term" value="C:cytoplasm"/>
    <property type="evidence" value="ECO:0007669"/>
    <property type="project" value="UniProtKB-SubCell"/>
</dbReference>
<dbReference type="GO" id="GO:0008270">
    <property type="term" value="F:zinc ion binding"/>
    <property type="evidence" value="ECO:0007669"/>
    <property type="project" value="UniProtKB-UniRule"/>
</dbReference>
<dbReference type="GO" id="GO:0006950">
    <property type="term" value="P:response to stress"/>
    <property type="evidence" value="ECO:0007669"/>
    <property type="project" value="UniProtKB-ARBA"/>
</dbReference>
<dbReference type="HAMAP" id="MF_00745">
    <property type="entry name" value="SprT_like"/>
    <property type="match status" value="1"/>
</dbReference>
<dbReference type="InterPro" id="IPR006640">
    <property type="entry name" value="SprT-like_domain"/>
</dbReference>
<dbReference type="InterPro" id="IPR023524">
    <property type="entry name" value="Uncharacterised_SprT-like"/>
</dbReference>
<dbReference type="NCBIfam" id="NF003339">
    <property type="entry name" value="PRK04351.1"/>
    <property type="match status" value="1"/>
</dbReference>
<dbReference type="Pfam" id="PF10263">
    <property type="entry name" value="SprT-like"/>
    <property type="match status" value="1"/>
</dbReference>
<dbReference type="SMART" id="SM00731">
    <property type="entry name" value="SprT"/>
    <property type="match status" value="1"/>
</dbReference>
<feature type="chain" id="PRO_1000133227" description="Protein SprT-like">
    <location>
        <begin position="1"/>
        <end position="151"/>
    </location>
</feature>
<feature type="domain" description="SprT-like" evidence="1">
    <location>
        <begin position="6"/>
        <end position="148"/>
    </location>
</feature>
<feature type="active site" evidence="1">
    <location>
        <position position="68"/>
    </location>
</feature>
<feature type="binding site" evidence="1">
    <location>
        <position position="67"/>
    </location>
    <ligand>
        <name>Zn(2+)</name>
        <dbReference type="ChEBI" id="CHEBI:29105"/>
    </ligand>
</feature>
<feature type="binding site" evidence="1">
    <location>
        <position position="71"/>
    </location>
    <ligand>
        <name>Zn(2+)</name>
        <dbReference type="ChEBI" id="CHEBI:29105"/>
    </ligand>
</feature>
<sequence>MDERELQALVERISLDVFHKPFRHRAVFNDRLRTTGGRYVLSTHHIELNRKYYEQYGEEELIQVIKHELCHYHLYLEGKGYRHRDRDFRELLQKVQAPRFCKPVLLSKTKKEHYYKCTSCRYMYVRRKALDTTRYVCGFCRGKLKKIKREC</sequence>